<evidence type="ECO:0000255" key="1">
    <source>
        <dbReference type="HAMAP-Rule" id="MF_00365"/>
    </source>
</evidence>
<reference key="1">
    <citation type="journal article" date="2004" name="Nucleic Acids Res.">
        <title>Genome sequence of Symbiobacterium thermophilum, an uncultivable bacterium that depends on microbial commensalism.</title>
        <authorList>
            <person name="Ueda K."/>
            <person name="Yamashita A."/>
            <person name="Ishikawa J."/>
            <person name="Shimada M."/>
            <person name="Watsuji T."/>
            <person name="Morimura K."/>
            <person name="Ikeda H."/>
            <person name="Hattori M."/>
            <person name="Beppu T."/>
        </authorList>
    </citation>
    <scope>NUCLEOTIDE SEQUENCE [LARGE SCALE GENOMIC DNA]</scope>
    <source>
        <strain>DSM 24528 / JCM 14929 / IAM 14863 / T</strain>
    </source>
</reference>
<comment type="function">
    <text evidence="1">The RecF protein is involved in DNA metabolism; it is required for DNA replication and normal SOS inducibility. RecF binds preferentially to single-stranded, linear DNA. It also seems to bind ATP.</text>
</comment>
<comment type="subcellular location">
    <subcellularLocation>
        <location evidence="1">Cytoplasm</location>
    </subcellularLocation>
</comment>
<comment type="similarity">
    <text evidence="1">Belongs to the RecF family.</text>
</comment>
<gene>
    <name evidence="1" type="primary">recF</name>
    <name type="ordered locus">STH4</name>
</gene>
<accession>Q67TK4</accession>
<protein>
    <recommendedName>
        <fullName evidence="1">DNA replication and repair protein RecF</fullName>
    </recommendedName>
</protein>
<keyword id="KW-0067">ATP-binding</keyword>
<keyword id="KW-0963">Cytoplasm</keyword>
<keyword id="KW-0227">DNA damage</keyword>
<keyword id="KW-0234">DNA repair</keyword>
<keyword id="KW-0235">DNA replication</keyword>
<keyword id="KW-0238">DNA-binding</keyword>
<keyword id="KW-0547">Nucleotide-binding</keyword>
<keyword id="KW-1185">Reference proteome</keyword>
<keyword id="KW-0742">SOS response</keyword>
<feature type="chain" id="PRO_0000236153" description="DNA replication and repair protein RecF">
    <location>
        <begin position="1"/>
        <end position="375"/>
    </location>
</feature>
<feature type="binding site" evidence="1">
    <location>
        <begin position="30"/>
        <end position="37"/>
    </location>
    <ligand>
        <name>ATP</name>
        <dbReference type="ChEBI" id="CHEBI:30616"/>
    </ligand>
</feature>
<organism>
    <name type="scientific">Symbiobacterium thermophilum (strain DSM 24528 / JCM 14929 / IAM 14863 / T)</name>
    <dbReference type="NCBI Taxonomy" id="292459"/>
    <lineage>
        <taxon>Bacteria</taxon>
        <taxon>Bacillati</taxon>
        <taxon>Bacillota</taxon>
        <taxon>Clostridia</taxon>
        <taxon>Eubacteriales</taxon>
        <taxon>Symbiobacteriaceae</taxon>
        <taxon>Symbiobacterium</taxon>
    </lineage>
</organism>
<sequence length="375" mass="42534">MYLSTLQLGAFRNYDSLTIHFSPGLNVLYGDNAQGKTNLLEAIHFLATGRSHRTSRDPDMVQEGREELLARAAVVRRTGTIELELRCGLQTRKQLKINGIAERKIARLVGSLAVVLFSPDDLQLLKGPPSGRRRFLDLELSQISQTYLHHLMAYNRLVAQRNTLLKQPVIDEGLMAVYDEQLVETGAQLVVRRAEAVRRLSPIASRYHRMLAEDREDLELAYQSQGVGDDGAADLETVRRRLERELARLRSEERRRQVTLVGPHRDDVGFWVAGRDARLYASQGQQRTAVLALKLAELEFMSEEIGEPPLLLLDDVASELDPHRRHYLLSAVREGVQSFITCTDLEDLMVREWPADHRLFRVRAGTVVLDDRGLS</sequence>
<dbReference type="EMBL" id="AP006840">
    <property type="protein sequence ID" value="BAD38989.1"/>
    <property type="molecule type" value="Genomic_DNA"/>
</dbReference>
<dbReference type="RefSeq" id="WP_011194139.1">
    <property type="nucleotide sequence ID" value="NC_006177.1"/>
</dbReference>
<dbReference type="SMR" id="Q67TK4"/>
<dbReference type="STRING" id="292459.STH4"/>
<dbReference type="KEGG" id="sth:STH4"/>
<dbReference type="eggNOG" id="COG1195">
    <property type="taxonomic scope" value="Bacteria"/>
</dbReference>
<dbReference type="HOGENOM" id="CLU_040267_0_1_9"/>
<dbReference type="OrthoDB" id="9803889at2"/>
<dbReference type="Proteomes" id="UP000000417">
    <property type="component" value="Chromosome"/>
</dbReference>
<dbReference type="GO" id="GO:0005737">
    <property type="term" value="C:cytoplasm"/>
    <property type="evidence" value="ECO:0007669"/>
    <property type="project" value="UniProtKB-SubCell"/>
</dbReference>
<dbReference type="GO" id="GO:0005524">
    <property type="term" value="F:ATP binding"/>
    <property type="evidence" value="ECO:0007669"/>
    <property type="project" value="UniProtKB-UniRule"/>
</dbReference>
<dbReference type="GO" id="GO:0003697">
    <property type="term" value="F:single-stranded DNA binding"/>
    <property type="evidence" value="ECO:0007669"/>
    <property type="project" value="UniProtKB-UniRule"/>
</dbReference>
<dbReference type="GO" id="GO:0006260">
    <property type="term" value="P:DNA replication"/>
    <property type="evidence" value="ECO:0007669"/>
    <property type="project" value="UniProtKB-UniRule"/>
</dbReference>
<dbReference type="GO" id="GO:0000731">
    <property type="term" value="P:DNA synthesis involved in DNA repair"/>
    <property type="evidence" value="ECO:0007669"/>
    <property type="project" value="TreeGrafter"/>
</dbReference>
<dbReference type="GO" id="GO:0006302">
    <property type="term" value="P:double-strand break repair"/>
    <property type="evidence" value="ECO:0007669"/>
    <property type="project" value="TreeGrafter"/>
</dbReference>
<dbReference type="GO" id="GO:0009432">
    <property type="term" value="P:SOS response"/>
    <property type="evidence" value="ECO:0007669"/>
    <property type="project" value="UniProtKB-UniRule"/>
</dbReference>
<dbReference type="CDD" id="cd03242">
    <property type="entry name" value="ABC_RecF"/>
    <property type="match status" value="1"/>
</dbReference>
<dbReference type="Gene3D" id="3.40.50.300">
    <property type="entry name" value="P-loop containing nucleotide triphosphate hydrolases"/>
    <property type="match status" value="1"/>
</dbReference>
<dbReference type="Gene3D" id="1.20.1050.90">
    <property type="entry name" value="RecF/RecN/SMC, N-terminal domain"/>
    <property type="match status" value="1"/>
</dbReference>
<dbReference type="HAMAP" id="MF_00365">
    <property type="entry name" value="RecF"/>
    <property type="match status" value="1"/>
</dbReference>
<dbReference type="InterPro" id="IPR001238">
    <property type="entry name" value="DNA-binding_RecF"/>
</dbReference>
<dbReference type="InterPro" id="IPR018078">
    <property type="entry name" value="DNA-binding_RecF_CS"/>
</dbReference>
<dbReference type="InterPro" id="IPR027417">
    <property type="entry name" value="P-loop_NTPase"/>
</dbReference>
<dbReference type="InterPro" id="IPR003395">
    <property type="entry name" value="RecF/RecN/SMC_N"/>
</dbReference>
<dbReference type="InterPro" id="IPR042174">
    <property type="entry name" value="RecF_2"/>
</dbReference>
<dbReference type="NCBIfam" id="TIGR00611">
    <property type="entry name" value="recf"/>
    <property type="match status" value="1"/>
</dbReference>
<dbReference type="PANTHER" id="PTHR32182">
    <property type="entry name" value="DNA REPLICATION AND REPAIR PROTEIN RECF"/>
    <property type="match status" value="1"/>
</dbReference>
<dbReference type="PANTHER" id="PTHR32182:SF0">
    <property type="entry name" value="DNA REPLICATION AND REPAIR PROTEIN RECF"/>
    <property type="match status" value="1"/>
</dbReference>
<dbReference type="Pfam" id="PF02463">
    <property type="entry name" value="SMC_N"/>
    <property type="match status" value="1"/>
</dbReference>
<dbReference type="SUPFAM" id="SSF52540">
    <property type="entry name" value="P-loop containing nucleoside triphosphate hydrolases"/>
    <property type="match status" value="1"/>
</dbReference>
<dbReference type="PROSITE" id="PS00617">
    <property type="entry name" value="RECF_1"/>
    <property type="match status" value="1"/>
</dbReference>
<dbReference type="PROSITE" id="PS00618">
    <property type="entry name" value="RECF_2"/>
    <property type="match status" value="1"/>
</dbReference>
<proteinExistence type="inferred from homology"/>
<name>RECF_SYMTH</name>